<accession>B5Z231</accession>
<reference key="1">
    <citation type="journal article" date="2011" name="Proc. Natl. Acad. Sci. U.S.A.">
        <title>Genomic anatomy of Escherichia coli O157:H7 outbreaks.</title>
        <authorList>
            <person name="Eppinger M."/>
            <person name="Mammel M.K."/>
            <person name="Leclerc J.E."/>
            <person name="Ravel J."/>
            <person name="Cebula T.A."/>
        </authorList>
    </citation>
    <scope>NUCLEOTIDE SEQUENCE [LARGE SCALE GENOMIC DNA]</scope>
    <source>
        <strain>EC4115 / EHEC</strain>
    </source>
</reference>
<organism>
    <name type="scientific">Escherichia coli O157:H7 (strain EC4115 / EHEC)</name>
    <dbReference type="NCBI Taxonomy" id="444450"/>
    <lineage>
        <taxon>Bacteria</taxon>
        <taxon>Pseudomonadati</taxon>
        <taxon>Pseudomonadota</taxon>
        <taxon>Gammaproteobacteria</taxon>
        <taxon>Enterobacterales</taxon>
        <taxon>Enterobacteriaceae</taxon>
        <taxon>Escherichia</taxon>
    </lineage>
</organism>
<keyword id="KW-0143">Chaperone</keyword>
<keyword id="KW-0963">Cytoplasm</keyword>
<keyword id="KW-0346">Stress response</keyword>
<evidence type="ECO:0000255" key="1">
    <source>
        <dbReference type="HAMAP-Rule" id="MF_01151"/>
    </source>
</evidence>
<evidence type="ECO:0000256" key="2">
    <source>
        <dbReference type="SAM" id="MobiDB-lite"/>
    </source>
</evidence>
<sequence length="197" mass="21840">MSSKEQKTPEGQAPEEIIMDQHEEIEAVEPEASAEQVDPRDEKIANLEAQLAEAQTRERDGILRVKAEMENLRRRTELDIEKAHKFALEKFINELLPVIDSLDRALEVADKANPDMSAMVEGIELTLKSMLDVVRKFGVEVIAETNVPLDPNVHQAIAMVESDDVAPGNVLGIMQKGYTLNGRTIRAAMVTVAKVKA</sequence>
<protein>
    <recommendedName>
        <fullName evidence="1">Protein GrpE</fullName>
    </recommendedName>
    <alternativeName>
        <fullName evidence="1">HSP-70 cofactor</fullName>
    </alternativeName>
</protein>
<name>GRPE_ECO5E</name>
<proteinExistence type="inferred from homology"/>
<comment type="function">
    <text evidence="1">Participates actively in the response to hyperosmotic and heat shock by preventing the aggregation of stress-denatured proteins, in association with DnaK and GrpE. It is the nucleotide exchange factor for DnaK and may function as a thermosensor. Unfolded proteins bind initially to DnaJ; upon interaction with the DnaJ-bound protein, DnaK hydrolyzes its bound ATP, resulting in the formation of a stable complex. GrpE releases ADP from DnaK; ATP binding to DnaK triggers the release of the substrate protein, thus completing the reaction cycle. Several rounds of ATP-dependent interactions between DnaJ, DnaK and GrpE are required for fully efficient folding.</text>
</comment>
<comment type="subunit">
    <text evidence="1">Homodimer.</text>
</comment>
<comment type="subcellular location">
    <subcellularLocation>
        <location evidence="1">Cytoplasm</location>
    </subcellularLocation>
</comment>
<comment type="similarity">
    <text evidence="1">Belongs to the GrpE family.</text>
</comment>
<dbReference type="EMBL" id="CP001164">
    <property type="protein sequence ID" value="ACI39414.1"/>
    <property type="molecule type" value="Genomic_DNA"/>
</dbReference>
<dbReference type="RefSeq" id="WP_001301442.1">
    <property type="nucleotide sequence ID" value="NC_011353.1"/>
</dbReference>
<dbReference type="SMR" id="B5Z231"/>
<dbReference type="KEGG" id="ecf:ECH74115_3853"/>
<dbReference type="HOGENOM" id="CLU_057217_6_0_6"/>
<dbReference type="GO" id="GO:0005829">
    <property type="term" value="C:cytosol"/>
    <property type="evidence" value="ECO:0007669"/>
    <property type="project" value="TreeGrafter"/>
</dbReference>
<dbReference type="GO" id="GO:0000774">
    <property type="term" value="F:adenyl-nucleotide exchange factor activity"/>
    <property type="evidence" value="ECO:0007669"/>
    <property type="project" value="InterPro"/>
</dbReference>
<dbReference type="GO" id="GO:0042803">
    <property type="term" value="F:protein homodimerization activity"/>
    <property type="evidence" value="ECO:0007669"/>
    <property type="project" value="InterPro"/>
</dbReference>
<dbReference type="GO" id="GO:0051087">
    <property type="term" value="F:protein-folding chaperone binding"/>
    <property type="evidence" value="ECO:0007669"/>
    <property type="project" value="InterPro"/>
</dbReference>
<dbReference type="GO" id="GO:0051082">
    <property type="term" value="F:unfolded protein binding"/>
    <property type="evidence" value="ECO:0007669"/>
    <property type="project" value="TreeGrafter"/>
</dbReference>
<dbReference type="GO" id="GO:0006457">
    <property type="term" value="P:protein folding"/>
    <property type="evidence" value="ECO:0007669"/>
    <property type="project" value="InterPro"/>
</dbReference>
<dbReference type="CDD" id="cd00446">
    <property type="entry name" value="GrpE"/>
    <property type="match status" value="1"/>
</dbReference>
<dbReference type="FunFam" id="2.30.22.10:FF:000001">
    <property type="entry name" value="Protein GrpE"/>
    <property type="match status" value="1"/>
</dbReference>
<dbReference type="FunFam" id="3.90.20.20:FF:000001">
    <property type="entry name" value="Protein GrpE"/>
    <property type="match status" value="1"/>
</dbReference>
<dbReference type="Gene3D" id="3.90.20.20">
    <property type="match status" value="1"/>
</dbReference>
<dbReference type="Gene3D" id="2.30.22.10">
    <property type="entry name" value="Head domain of nucleotide exchange factor GrpE"/>
    <property type="match status" value="1"/>
</dbReference>
<dbReference type="HAMAP" id="MF_01151">
    <property type="entry name" value="GrpE"/>
    <property type="match status" value="1"/>
</dbReference>
<dbReference type="InterPro" id="IPR000740">
    <property type="entry name" value="GrpE"/>
</dbReference>
<dbReference type="InterPro" id="IPR013805">
    <property type="entry name" value="GrpE_coiled_coil"/>
</dbReference>
<dbReference type="InterPro" id="IPR009012">
    <property type="entry name" value="GrpE_head"/>
</dbReference>
<dbReference type="NCBIfam" id="NF007655">
    <property type="entry name" value="PRK10325.1"/>
    <property type="match status" value="1"/>
</dbReference>
<dbReference type="NCBIfam" id="NF010738">
    <property type="entry name" value="PRK14140.1"/>
    <property type="match status" value="1"/>
</dbReference>
<dbReference type="NCBIfam" id="NF010748">
    <property type="entry name" value="PRK14150.1"/>
    <property type="match status" value="1"/>
</dbReference>
<dbReference type="PANTHER" id="PTHR21237">
    <property type="entry name" value="GRPE PROTEIN"/>
    <property type="match status" value="1"/>
</dbReference>
<dbReference type="PANTHER" id="PTHR21237:SF23">
    <property type="entry name" value="GRPE PROTEIN HOMOLOG, MITOCHONDRIAL"/>
    <property type="match status" value="1"/>
</dbReference>
<dbReference type="Pfam" id="PF01025">
    <property type="entry name" value="GrpE"/>
    <property type="match status" value="1"/>
</dbReference>
<dbReference type="PRINTS" id="PR00773">
    <property type="entry name" value="GRPEPROTEIN"/>
</dbReference>
<dbReference type="SUPFAM" id="SSF58014">
    <property type="entry name" value="Coiled-coil domain of nucleotide exchange factor GrpE"/>
    <property type="match status" value="1"/>
</dbReference>
<dbReference type="SUPFAM" id="SSF51064">
    <property type="entry name" value="Head domain of nucleotide exchange factor GrpE"/>
    <property type="match status" value="1"/>
</dbReference>
<dbReference type="PROSITE" id="PS01071">
    <property type="entry name" value="GRPE"/>
    <property type="match status" value="1"/>
</dbReference>
<gene>
    <name evidence="1" type="primary">grpE</name>
    <name type="ordered locus">ECH74115_3853</name>
</gene>
<feature type="chain" id="PRO_1000137561" description="Protein GrpE">
    <location>
        <begin position="1"/>
        <end position="197"/>
    </location>
</feature>
<feature type="region of interest" description="Disordered" evidence="2">
    <location>
        <begin position="1"/>
        <end position="39"/>
    </location>
</feature>